<proteinExistence type="inferred from homology"/>
<dbReference type="EC" id="4.1.1.48" evidence="1"/>
<dbReference type="EMBL" id="AJ938182">
    <property type="protein sequence ID" value="CAI80914.1"/>
    <property type="molecule type" value="Genomic_DNA"/>
</dbReference>
<dbReference type="RefSeq" id="WP_000153620.1">
    <property type="nucleotide sequence ID" value="NC_007622.1"/>
</dbReference>
<dbReference type="SMR" id="Q2YXU9"/>
<dbReference type="KEGG" id="sab:SAB1225"/>
<dbReference type="HOGENOM" id="CLU_034247_2_1_9"/>
<dbReference type="UniPathway" id="UPA00035">
    <property type="reaction ID" value="UER00043"/>
</dbReference>
<dbReference type="GO" id="GO:0004425">
    <property type="term" value="F:indole-3-glycerol-phosphate synthase activity"/>
    <property type="evidence" value="ECO:0007669"/>
    <property type="project" value="UniProtKB-UniRule"/>
</dbReference>
<dbReference type="GO" id="GO:0004640">
    <property type="term" value="F:phosphoribosylanthranilate isomerase activity"/>
    <property type="evidence" value="ECO:0007669"/>
    <property type="project" value="TreeGrafter"/>
</dbReference>
<dbReference type="GO" id="GO:0000162">
    <property type="term" value="P:L-tryptophan biosynthetic process"/>
    <property type="evidence" value="ECO:0007669"/>
    <property type="project" value="UniProtKB-UniRule"/>
</dbReference>
<dbReference type="CDD" id="cd00331">
    <property type="entry name" value="IGPS"/>
    <property type="match status" value="1"/>
</dbReference>
<dbReference type="FunFam" id="3.20.20.70:FF:000212">
    <property type="entry name" value="Indole-3-glycerol phosphate synthase"/>
    <property type="match status" value="1"/>
</dbReference>
<dbReference type="Gene3D" id="3.20.20.70">
    <property type="entry name" value="Aldolase class I"/>
    <property type="match status" value="1"/>
</dbReference>
<dbReference type="HAMAP" id="MF_00134_B">
    <property type="entry name" value="IGPS_B"/>
    <property type="match status" value="1"/>
</dbReference>
<dbReference type="InterPro" id="IPR013785">
    <property type="entry name" value="Aldolase_TIM"/>
</dbReference>
<dbReference type="InterPro" id="IPR045186">
    <property type="entry name" value="Indole-3-glycerol_P_synth"/>
</dbReference>
<dbReference type="InterPro" id="IPR013798">
    <property type="entry name" value="Indole-3-glycerol_P_synth_dom"/>
</dbReference>
<dbReference type="InterPro" id="IPR001468">
    <property type="entry name" value="Indole-3-GlycerolPSynthase_CS"/>
</dbReference>
<dbReference type="InterPro" id="IPR011060">
    <property type="entry name" value="RibuloseP-bd_barrel"/>
</dbReference>
<dbReference type="NCBIfam" id="NF001371">
    <property type="entry name" value="PRK00278.1-3"/>
    <property type="match status" value="1"/>
</dbReference>
<dbReference type="PANTHER" id="PTHR22854:SF2">
    <property type="entry name" value="INDOLE-3-GLYCEROL-PHOSPHATE SYNTHASE"/>
    <property type="match status" value="1"/>
</dbReference>
<dbReference type="PANTHER" id="PTHR22854">
    <property type="entry name" value="TRYPTOPHAN BIOSYNTHESIS PROTEIN"/>
    <property type="match status" value="1"/>
</dbReference>
<dbReference type="Pfam" id="PF00218">
    <property type="entry name" value="IGPS"/>
    <property type="match status" value="1"/>
</dbReference>
<dbReference type="SUPFAM" id="SSF51366">
    <property type="entry name" value="Ribulose-phoshate binding barrel"/>
    <property type="match status" value="1"/>
</dbReference>
<dbReference type="PROSITE" id="PS00614">
    <property type="entry name" value="IGPS"/>
    <property type="match status" value="1"/>
</dbReference>
<name>TRPC_STAAB</name>
<keyword id="KW-0028">Amino-acid biosynthesis</keyword>
<keyword id="KW-0057">Aromatic amino acid biosynthesis</keyword>
<keyword id="KW-0210">Decarboxylase</keyword>
<keyword id="KW-0456">Lyase</keyword>
<keyword id="KW-0822">Tryptophan biosynthesis</keyword>
<comment type="catalytic activity">
    <reaction evidence="1">
        <text>1-(2-carboxyphenylamino)-1-deoxy-D-ribulose 5-phosphate + H(+) = (1S,2R)-1-C-(indol-3-yl)glycerol 3-phosphate + CO2 + H2O</text>
        <dbReference type="Rhea" id="RHEA:23476"/>
        <dbReference type="ChEBI" id="CHEBI:15377"/>
        <dbReference type="ChEBI" id="CHEBI:15378"/>
        <dbReference type="ChEBI" id="CHEBI:16526"/>
        <dbReference type="ChEBI" id="CHEBI:58613"/>
        <dbReference type="ChEBI" id="CHEBI:58866"/>
        <dbReference type="EC" id="4.1.1.48"/>
    </reaction>
</comment>
<comment type="pathway">
    <text evidence="1">Amino-acid biosynthesis; L-tryptophan biosynthesis; L-tryptophan from chorismate: step 4/5.</text>
</comment>
<comment type="similarity">
    <text evidence="1">Belongs to the TrpC family.</text>
</comment>
<reference key="1">
    <citation type="journal article" date="2007" name="PLoS ONE">
        <title>Molecular correlates of host specialization in Staphylococcus aureus.</title>
        <authorList>
            <person name="Herron-Olson L."/>
            <person name="Fitzgerald J.R."/>
            <person name="Musser J.M."/>
            <person name="Kapur V."/>
        </authorList>
    </citation>
    <scope>NUCLEOTIDE SEQUENCE [LARGE SCALE GENOMIC DNA]</scope>
    <source>
        <strain>bovine RF122 / ET3-1</strain>
    </source>
</reference>
<organism>
    <name type="scientific">Staphylococcus aureus (strain bovine RF122 / ET3-1)</name>
    <dbReference type="NCBI Taxonomy" id="273036"/>
    <lineage>
        <taxon>Bacteria</taxon>
        <taxon>Bacillati</taxon>
        <taxon>Bacillota</taxon>
        <taxon>Bacilli</taxon>
        <taxon>Bacillales</taxon>
        <taxon>Staphylococcaceae</taxon>
        <taxon>Staphylococcus</taxon>
    </lineage>
</organism>
<feature type="chain" id="PRO_1000095891" description="Indole-3-glycerol phosphate synthase">
    <location>
        <begin position="1"/>
        <end position="260"/>
    </location>
</feature>
<accession>Q2YXU9</accession>
<gene>
    <name evidence="1" type="primary">trpC</name>
    <name type="ordered locus">SAB1225</name>
</gene>
<evidence type="ECO:0000255" key="1">
    <source>
        <dbReference type="HAMAP-Rule" id="MF_00134"/>
    </source>
</evidence>
<protein>
    <recommendedName>
        <fullName evidence="1">Indole-3-glycerol phosphate synthase</fullName>
        <shortName evidence="1">IGPS</shortName>
        <ecNumber evidence="1">4.1.1.48</ecNumber>
    </recommendedName>
</protein>
<sequence length="260" mass="29608">MTILAEIVKYKQSLLQNGYYQDKLNTLKSVKIQNKKSFINAIEKERKLAIIAEIKSKSPTVNDLPERDLSQQISDYEKYGANAVSILTDEKYFGGSFERLQALTTKTTLPVLCKDFIIDPLQIDVAKQAGASMILLIVNILSDKQLKDLYNYAISQNLEVLVEVHDRHELERVYKVNAKLIGVNNRDLKRFVTNVEHTNTILENKKPNHYYISESGIHDASDVRKILHSGIDGLLIGEALMRCDNLSEFLPQLKMQKVKS</sequence>